<sequence length="729" mass="83055">MAPPRKRGRGSFRGSSRGARKPGNARGGRNSFQTSRIDEKREIESSDEENQFNGFEDDVSGDDEPVQDEEIVDSSSEDEEATTERPYNSLLQLLNANSETKHARKRRKLDRAGSKSQDIRDVEIQASKEVEEQDVLENQEASEEEDNAEADKAGESEDEDEDASDPFETHIASLDEAETTKRVNEIKSDKWRSIKSSLPENFRLIYNIPDGEGGSWSMPSAVKTTRSLKLKKKLVSRAAEILPSFEGVAQNIASLVFNYSDVLFAGRTPSNAAQMRDLLSLHSLNHVLKTRDRVIKNNARLSRDTNEDIEVRDQGFTRPKVLVILPTRQACVRFVESISKIYQPEQQENRKRFMDEYHAEDNESWASKPDDFRDLFGGNDDDMFRIGLKFTRKTIKYYSQFYNSDIILASPLGLRTIMDKEDEKKRDHDFLSSIEIAIVDHSDGLLMQNWEHVEYICEHLNLQPKEAHGCDFSRVRTWYLDDRARYIRQTIVLTSFLTPEINSLFSQHMQNIAGKSKILPQYNGAITEVALPITVKQTFSRFDSTFALKDPDLRFKYFTTAILPALARSVTGKGEGNGAGTLIFIPSYLDFVRVRNFFATSSQATNISFGAISEYTEQSEMSRARSHFMNGRLSVLLYTERAHHFRRYNIRGVKHIIFYGLPENPIFFREIVQYLGQDPGVLAGTAGAENLDVRAVFSKYDAFKLERIVGTQRAGNMLKEKGGDTFRFV</sequence>
<evidence type="ECO:0000250" key="1"/>
<evidence type="ECO:0000256" key="2">
    <source>
        <dbReference type="SAM" id="MobiDB-lite"/>
    </source>
</evidence>
<evidence type="ECO:0000305" key="3"/>
<comment type="function">
    <text evidence="1">DEAD-box RNA helicase-like protein required for pre-18S rRNA processing, specifically at sites A0, A1, and A2.</text>
</comment>
<comment type="subunit">
    <text evidence="1">Component of the ribosomal small subunit (SSU) processome composed of at least 40 protein subunits and snoRNA U3.</text>
</comment>
<comment type="subcellular location">
    <subcellularLocation>
        <location evidence="1">Nucleus</location>
        <location evidence="1">Nucleolus</location>
    </subcellularLocation>
</comment>
<comment type="similarity">
    <text evidence="3">Belongs to the UTP25 family.</text>
</comment>
<reference key="1">
    <citation type="journal article" date="2015" name="Genome Announc.">
        <title>Genome sequence of the AIDS-associated pathogen Penicillium marneffei (ATCC18224) and its near taxonomic relative Talaromyces stipitatus (ATCC10500).</title>
        <authorList>
            <person name="Nierman W.C."/>
            <person name="Fedorova-Abrams N.D."/>
            <person name="Andrianopoulos A."/>
        </authorList>
    </citation>
    <scope>NUCLEOTIDE SEQUENCE [LARGE SCALE GENOMIC DNA]</scope>
    <source>
        <strain>ATCC 10500 / CBS 375.48 / QM 6759 / NRRL 1006</strain>
    </source>
</reference>
<organism>
    <name type="scientific">Talaromyces stipitatus (strain ATCC 10500 / CBS 375.48 / QM 6759 / NRRL 1006)</name>
    <name type="common">Penicillium stipitatum</name>
    <dbReference type="NCBI Taxonomy" id="441959"/>
    <lineage>
        <taxon>Eukaryota</taxon>
        <taxon>Fungi</taxon>
        <taxon>Dikarya</taxon>
        <taxon>Ascomycota</taxon>
        <taxon>Pezizomycotina</taxon>
        <taxon>Eurotiomycetes</taxon>
        <taxon>Eurotiomycetidae</taxon>
        <taxon>Eurotiales</taxon>
        <taxon>Trichocomaceae</taxon>
        <taxon>Talaromyces</taxon>
        <taxon>Talaromyces sect. Talaromyces</taxon>
    </lineage>
</organism>
<accession>B8LVD6</accession>
<name>UTP25_TALSN</name>
<feature type="chain" id="PRO_0000408141" description="U3 small nucleolar RNA-associated protein 25">
    <location>
        <begin position="1"/>
        <end position="729"/>
    </location>
</feature>
<feature type="region of interest" description="Disordered" evidence="2">
    <location>
        <begin position="1"/>
        <end position="165"/>
    </location>
</feature>
<feature type="compositionally biased region" description="Basic residues" evidence="2">
    <location>
        <begin position="1"/>
        <end position="10"/>
    </location>
</feature>
<feature type="compositionally biased region" description="Acidic residues" evidence="2">
    <location>
        <begin position="45"/>
        <end position="81"/>
    </location>
</feature>
<feature type="compositionally biased region" description="Polar residues" evidence="2">
    <location>
        <begin position="85"/>
        <end position="98"/>
    </location>
</feature>
<feature type="compositionally biased region" description="Basic and acidic residues" evidence="2">
    <location>
        <begin position="110"/>
        <end position="130"/>
    </location>
</feature>
<feature type="compositionally biased region" description="Acidic residues" evidence="2">
    <location>
        <begin position="131"/>
        <end position="148"/>
    </location>
</feature>
<feature type="compositionally biased region" description="Acidic residues" evidence="2">
    <location>
        <begin position="156"/>
        <end position="165"/>
    </location>
</feature>
<keyword id="KW-0539">Nucleus</keyword>
<keyword id="KW-1185">Reference proteome</keyword>
<keyword id="KW-0687">Ribonucleoprotein</keyword>
<keyword id="KW-0690">Ribosome biogenesis</keyword>
<keyword id="KW-0698">rRNA processing</keyword>
<proteinExistence type="inferred from homology"/>
<gene>
    <name type="primary">utp25</name>
    <name type="ORF">TSTA_073440</name>
</gene>
<dbReference type="EMBL" id="EQ962652">
    <property type="protein sequence ID" value="EED23955.1"/>
    <property type="molecule type" value="Genomic_DNA"/>
</dbReference>
<dbReference type="RefSeq" id="XP_002341342.1">
    <property type="nucleotide sequence ID" value="XM_002341301.1"/>
</dbReference>
<dbReference type="FunCoup" id="B8LVD6">
    <property type="interactions" value="1242"/>
</dbReference>
<dbReference type="STRING" id="441959.B8LVD6"/>
<dbReference type="GeneID" id="8103959"/>
<dbReference type="VEuPathDB" id="FungiDB:TSTA_073440"/>
<dbReference type="eggNOG" id="KOG2340">
    <property type="taxonomic scope" value="Eukaryota"/>
</dbReference>
<dbReference type="HOGENOM" id="CLU_018705_0_1_1"/>
<dbReference type="InParanoid" id="B8LVD6"/>
<dbReference type="OMA" id="QDRGDTF"/>
<dbReference type="OrthoDB" id="10264378at2759"/>
<dbReference type="PhylomeDB" id="B8LVD6"/>
<dbReference type="Proteomes" id="UP000001745">
    <property type="component" value="Unassembled WGS sequence"/>
</dbReference>
<dbReference type="GO" id="GO:0005730">
    <property type="term" value="C:nucleolus"/>
    <property type="evidence" value="ECO:0007669"/>
    <property type="project" value="UniProtKB-SubCell"/>
</dbReference>
<dbReference type="GO" id="GO:0032040">
    <property type="term" value="C:small-subunit processome"/>
    <property type="evidence" value="ECO:0007669"/>
    <property type="project" value="EnsemblFungi"/>
</dbReference>
<dbReference type="GO" id="GO:0019843">
    <property type="term" value="F:rRNA binding"/>
    <property type="evidence" value="ECO:0007669"/>
    <property type="project" value="EnsemblFungi"/>
</dbReference>
<dbReference type="GO" id="GO:0034511">
    <property type="term" value="F:U3 snoRNA binding"/>
    <property type="evidence" value="ECO:0007669"/>
    <property type="project" value="EnsemblFungi"/>
</dbReference>
<dbReference type="GO" id="GO:0000462">
    <property type="term" value="P:maturation of SSU-rRNA from tricistronic rRNA transcript (SSU-rRNA, 5.8S rRNA, LSU-rRNA)"/>
    <property type="evidence" value="ECO:0007669"/>
    <property type="project" value="EnsemblFungi"/>
</dbReference>
<dbReference type="FunFam" id="3.40.50.300:FF:002356">
    <property type="entry name" value="U3 small nucleolar RNA-associated protein 25"/>
    <property type="match status" value="1"/>
</dbReference>
<dbReference type="Gene3D" id="3.40.50.300">
    <property type="entry name" value="P-loop containing nucleotide triphosphate hydrolases"/>
    <property type="match status" value="1"/>
</dbReference>
<dbReference type="InterPro" id="IPR027417">
    <property type="entry name" value="P-loop_NTPase"/>
</dbReference>
<dbReference type="InterPro" id="IPR010678">
    <property type="entry name" value="UTP25"/>
</dbReference>
<dbReference type="InterPro" id="IPR053939">
    <property type="entry name" value="UTP25_C"/>
</dbReference>
<dbReference type="InterPro" id="IPR053940">
    <property type="entry name" value="UTP25_NTPase-like"/>
</dbReference>
<dbReference type="PANTHER" id="PTHR12933">
    <property type="entry name" value="ORF PROTEIN-RELATED"/>
    <property type="match status" value="1"/>
</dbReference>
<dbReference type="PANTHER" id="PTHR12933:SF0">
    <property type="entry name" value="U3 SMALL NUCLEOLAR RNA-ASSOCIATED PROTEIN 25 HOMOLOG"/>
    <property type="match status" value="1"/>
</dbReference>
<dbReference type="Pfam" id="PF06862">
    <property type="entry name" value="Utp25_C"/>
    <property type="match status" value="1"/>
</dbReference>
<dbReference type="Pfam" id="PF22916">
    <property type="entry name" value="UTP25_NTPase-like"/>
    <property type="match status" value="1"/>
</dbReference>
<dbReference type="SUPFAM" id="SSF52540">
    <property type="entry name" value="P-loop containing nucleoside triphosphate hydrolases"/>
    <property type="match status" value="1"/>
</dbReference>
<protein>
    <recommendedName>
        <fullName>U3 small nucleolar RNA-associated protein 25</fullName>
        <shortName>U3 snoRNA-associated protein 25</shortName>
    </recommendedName>
    <alternativeName>
        <fullName>U three protein 25</fullName>
    </alternativeName>
</protein>